<sequence length="89" mass="10198">MSLSTEATAKIVSEFGRDANDTGSTDVQVALLTAQINHLQGHFAEHKKDHHSRRGLLRMVSQRRKLLDYLKRKDVARYTALIERLGLRR</sequence>
<proteinExistence type="inferred from homology"/>
<evidence type="ECO:0000255" key="1">
    <source>
        <dbReference type="HAMAP-Rule" id="MF_01343"/>
    </source>
</evidence>
<evidence type="ECO:0000305" key="2"/>
<comment type="function">
    <text evidence="1">One of the primary rRNA binding proteins, it binds directly to 16S rRNA where it helps nucleate assembly of the platform of the 30S subunit by binding and bridging several RNA helices of the 16S rRNA.</text>
</comment>
<comment type="function">
    <text evidence="1">Forms an intersubunit bridge (bridge B4) with the 23S rRNA of the 50S subunit in the ribosome.</text>
</comment>
<comment type="subunit">
    <text evidence="1">Part of the 30S ribosomal subunit. Forms a bridge to the 50S subunit in the 70S ribosome, contacting the 23S rRNA.</text>
</comment>
<comment type="similarity">
    <text evidence="1">Belongs to the universal ribosomal protein uS15 family.</text>
</comment>
<protein>
    <recommendedName>
        <fullName evidence="1">Small ribosomal subunit protein uS15</fullName>
    </recommendedName>
    <alternativeName>
        <fullName evidence="2">30S ribosomal protein S15</fullName>
    </alternativeName>
</protein>
<dbReference type="EMBL" id="CP001138">
    <property type="protein sequence ID" value="ACH51342.1"/>
    <property type="molecule type" value="Genomic_DNA"/>
</dbReference>
<dbReference type="RefSeq" id="WP_000059465.1">
    <property type="nucleotide sequence ID" value="NC_011149.1"/>
</dbReference>
<dbReference type="SMR" id="B5F6T5"/>
<dbReference type="GeneID" id="93035884"/>
<dbReference type="KEGG" id="sea:SeAg_B3471"/>
<dbReference type="HOGENOM" id="CLU_148518_0_0_6"/>
<dbReference type="Proteomes" id="UP000008819">
    <property type="component" value="Chromosome"/>
</dbReference>
<dbReference type="GO" id="GO:0022627">
    <property type="term" value="C:cytosolic small ribosomal subunit"/>
    <property type="evidence" value="ECO:0007669"/>
    <property type="project" value="TreeGrafter"/>
</dbReference>
<dbReference type="GO" id="GO:0019843">
    <property type="term" value="F:rRNA binding"/>
    <property type="evidence" value="ECO:0007669"/>
    <property type="project" value="UniProtKB-UniRule"/>
</dbReference>
<dbReference type="GO" id="GO:0003735">
    <property type="term" value="F:structural constituent of ribosome"/>
    <property type="evidence" value="ECO:0007669"/>
    <property type="project" value="InterPro"/>
</dbReference>
<dbReference type="GO" id="GO:0006412">
    <property type="term" value="P:translation"/>
    <property type="evidence" value="ECO:0007669"/>
    <property type="project" value="UniProtKB-UniRule"/>
</dbReference>
<dbReference type="CDD" id="cd00353">
    <property type="entry name" value="Ribosomal_S15p_S13e"/>
    <property type="match status" value="1"/>
</dbReference>
<dbReference type="FunFam" id="1.10.287.10:FF:000002">
    <property type="entry name" value="30S ribosomal protein S15"/>
    <property type="match status" value="1"/>
</dbReference>
<dbReference type="Gene3D" id="6.10.250.3130">
    <property type="match status" value="1"/>
</dbReference>
<dbReference type="Gene3D" id="1.10.287.10">
    <property type="entry name" value="S15/NS1, RNA-binding"/>
    <property type="match status" value="1"/>
</dbReference>
<dbReference type="HAMAP" id="MF_01343_B">
    <property type="entry name" value="Ribosomal_uS15_B"/>
    <property type="match status" value="1"/>
</dbReference>
<dbReference type="InterPro" id="IPR000589">
    <property type="entry name" value="Ribosomal_uS15"/>
</dbReference>
<dbReference type="InterPro" id="IPR005290">
    <property type="entry name" value="Ribosomal_uS15_bac-type"/>
</dbReference>
<dbReference type="InterPro" id="IPR009068">
    <property type="entry name" value="uS15_NS1_RNA-bd_sf"/>
</dbReference>
<dbReference type="NCBIfam" id="TIGR00952">
    <property type="entry name" value="S15_bact"/>
    <property type="match status" value="1"/>
</dbReference>
<dbReference type="PANTHER" id="PTHR23321">
    <property type="entry name" value="RIBOSOMAL PROTEIN S15, BACTERIAL AND ORGANELLAR"/>
    <property type="match status" value="1"/>
</dbReference>
<dbReference type="PANTHER" id="PTHR23321:SF26">
    <property type="entry name" value="SMALL RIBOSOMAL SUBUNIT PROTEIN US15M"/>
    <property type="match status" value="1"/>
</dbReference>
<dbReference type="Pfam" id="PF00312">
    <property type="entry name" value="Ribosomal_S15"/>
    <property type="match status" value="1"/>
</dbReference>
<dbReference type="SMART" id="SM01387">
    <property type="entry name" value="Ribosomal_S15"/>
    <property type="match status" value="1"/>
</dbReference>
<dbReference type="SUPFAM" id="SSF47060">
    <property type="entry name" value="S15/NS1 RNA-binding domain"/>
    <property type="match status" value="1"/>
</dbReference>
<dbReference type="PROSITE" id="PS00362">
    <property type="entry name" value="RIBOSOMAL_S15"/>
    <property type="match status" value="1"/>
</dbReference>
<reference key="1">
    <citation type="journal article" date="2011" name="J. Bacteriol.">
        <title>Comparative genomics of 28 Salmonella enterica isolates: evidence for CRISPR-mediated adaptive sublineage evolution.</title>
        <authorList>
            <person name="Fricke W.F."/>
            <person name="Mammel M.K."/>
            <person name="McDermott P.F."/>
            <person name="Tartera C."/>
            <person name="White D.G."/>
            <person name="Leclerc J.E."/>
            <person name="Ravel J."/>
            <person name="Cebula T.A."/>
        </authorList>
    </citation>
    <scope>NUCLEOTIDE SEQUENCE [LARGE SCALE GENOMIC DNA]</scope>
    <source>
        <strain>SL483</strain>
    </source>
</reference>
<gene>
    <name evidence="1" type="primary">rpsO</name>
    <name type="ordered locus">SeAg_B3471</name>
</gene>
<name>RS15_SALA4</name>
<accession>B5F6T5</accession>
<organism>
    <name type="scientific">Salmonella agona (strain SL483)</name>
    <dbReference type="NCBI Taxonomy" id="454166"/>
    <lineage>
        <taxon>Bacteria</taxon>
        <taxon>Pseudomonadati</taxon>
        <taxon>Pseudomonadota</taxon>
        <taxon>Gammaproteobacteria</taxon>
        <taxon>Enterobacterales</taxon>
        <taxon>Enterobacteriaceae</taxon>
        <taxon>Salmonella</taxon>
    </lineage>
</organism>
<feature type="chain" id="PRO_1000143162" description="Small ribosomal subunit protein uS15">
    <location>
        <begin position="1"/>
        <end position="89"/>
    </location>
</feature>
<keyword id="KW-0687">Ribonucleoprotein</keyword>
<keyword id="KW-0689">Ribosomal protein</keyword>
<keyword id="KW-0694">RNA-binding</keyword>
<keyword id="KW-0699">rRNA-binding</keyword>